<name>RL21_JANSC</name>
<accession>Q28Q15</accession>
<keyword id="KW-1185">Reference proteome</keyword>
<keyword id="KW-0687">Ribonucleoprotein</keyword>
<keyword id="KW-0689">Ribosomal protein</keyword>
<keyword id="KW-0694">RNA-binding</keyword>
<keyword id="KW-0699">rRNA-binding</keyword>
<comment type="function">
    <text evidence="1">This protein binds to 23S rRNA in the presence of protein L20.</text>
</comment>
<comment type="subunit">
    <text evidence="1">Part of the 50S ribosomal subunit. Contacts protein L20.</text>
</comment>
<comment type="similarity">
    <text evidence="1">Belongs to the bacterial ribosomal protein bL21 family.</text>
</comment>
<sequence>MFAVMKTGGKQYKVQAGDKLRVELLAAEAGEAVQFNEILMLGGDNVTVGAPLVEGAAVQANVIEQVKGAKLIHYVKRRRKHSSQRKKGHRQKLTLIEITDILASGGDKSGMKTAIGAGMVAVAAGAVATAAVVATKAAKKAKDAKDEAPKAAPKAEKKKAAPKKAKAEAAPAAADEGTRPANLLDAARDGKADDLKKISGVGPKLEGLLNENGVYHFDQIMAWGPSEIAYMDDKLSFKGRIERDNWIEQATAFAAEQE</sequence>
<protein>
    <recommendedName>
        <fullName evidence="1">Large ribosomal subunit protein bL21</fullName>
    </recommendedName>
    <alternativeName>
        <fullName evidence="3">50S ribosomal protein L21</fullName>
    </alternativeName>
</protein>
<organism>
    <name type="scientific">Jannaschia sp. (strain CCS1)</name>
    <dbReference type="NCBI Taxonomy" id="290400"/>
    <lineage>
        <taxon>Bacteria</taxon>
        <taxon>Pseudomonadati</taxon>
        <taxon>Pseudomonadota</taxon>
        <taxon>Alphaproteobacteria</taxon>
        <taxon>Rhodobacterales</taxon>
        <taxon>Roseobacteraceae</taxon>
        <taxon>Jannaschia</taxon>
    </lineage>
</organism>
<reference key="1">
    <citation type="submission" date="2006-02" db="EMBL/GenBank/DDBJ databases">
        <title>Complete sequence of chromosome of Jannaschia sp. CCS1.</title>
        <authorList>
            <consortium name="US DOE Joint Genome Institute"/>
            <person name="Copeland A."/>
            <person name="Lucas S."/>
            <person name="Lapidus A."/>
            <person name="Barry K."/>
            <person name="Detter J.C."/>
            <person name="Glavina del Rio T."/>
            <person name="Hammon N."/>
            <person name="Israni S."/>
            <person name="Pitluck S."/>
            <person name="Brettin T."/>
            <person name="Bruce D."/>
            <person name="Han C."/>
            <person name="Tapia R."/>
            <person name="Gilna P."/>
            <person name="Chertkov O."/>
            <person name="Saunders E."/>
            <person name="Schmutz J."/>
            <person name="Larimer F."/>
            <person name="Land M."/>
            <person name="Kyrpides N."/>
            <person name="Lykidis A."/>
            <person name="Moran M.A."/>
            <person name="Belas R."/>
            <person name="Ye W."/>
            <person name="Buchan A."/>
            <person name="Gonzalez J.M."/>
            <person name="Schell M.A."/>
            <person name="Richardson P."/>
        </authorList>
    </citation>
    <scope>NUCLEOTIDE SEQUENCE [LARGE SCALE GENOMIC DNA]</scope>
    <source>
        <strain>CCS1</strain>
    </source>
</reference>
<proteinExistence type="inferred from homology"/>
<gene>
    <name evidence="1" type="primary">rplU</name>
    <name type="ordered locus">Jann_2280</name>
</gene>
<dbReference type="EMBL" id="CP000264">
    <property type="protein sequence ID" value="ABD55197.1"/>
    <property type="molecule type" value="Genomic_DNA"/>
</dbReference>
<dbReference type="RefSeq" id="WP_011455401.1">
    <property type="nucleotide sequence ID" value="NC_007802.1"/>
</dbReference>
<dbReference type="SMR" id="Q28Q15"/>
<dbReference type="STRING" id="290400.Jann_2280"/>
<dbReference type="KEGG" id="jan:Jann_2280"/>
<dbReference type="eggNOG" id="COG0261">
    <property type="taxonomic scope" value="Bacteria"/>
</dbReference>
<dbReference type="eggNOG" id="COG3743">
    <property type="taxonomic scope" value="Bacteria"/>
</dbReference>
<dbReference type="HOGENOM" id="CLU_061463_1_0_5"/>
<dbReference type="OrthoDB" id="9813334at2"/>
<dbReference type="Proteomes" id="UP000008326">
    <property type="component" value="Chromosome"/>
</dbReference>
<dbReference type="GO" id="GO:0005737">
    <property type="term" value="C:cytoplasm"/>
    <property type="evidence" value="ECO:0007669"/>
    <property type="project" value="UniProtKB-ARBA"/>
</dbReference>
<dbReference type="GO" id="GO:1990904">
    <property type="term" value="C:ribonucleoprotein complex"/>
    <property type="evidence" value="ECO:0007669"/>
    <property type="project" value="UniProtKB-KW"/>
</dbReference>
<dbReference type="GO" id="GO:0005840">
    <property type="term" value="C:ribosome"/>
    <property type="evidence" value="ECO:0007669"/>
    <property type="project" value="UniProtKB-KW"/>
</dbReference>
<dbReference type="GO" id="GO:0019843">
    <property type="term" value="F:rRNA binding"/>
    <property type="evidence" value="ECO:0007669"/>
    <property type="project" value="UniProtKB-UniRule"/>
</dbReference>
<dbReference type="GO" id="GO:0003735">
    <property type="term" value="F:structural constituent of ribosome"/>
    <property type="evidence" value="ECO:0007669"/>
    <property type="project" value="InterPro"/>
</dbReference>
<dbReference type="GO" id="GO:0006412">
    <property type="term" value="P:translation"/>
    <property type="evidence" value="ECO:0007669"/>
    <property type="project" value="UniProtKB-UniRule"/>
</dbReference>
<dbReference type="Gene3D" id="1.10.150.20">
    <property type="entry name" value="5' to 3' exonuclease, C-terminal subdomain"/>
    <property type="match status" value="1"/>
</dbReference>
<dbReference type="HAMAP" id="MF_01363">
    <property type="entry name" value="Ribosomal_bL21"/>
    <property type="match status" value="1"/>
</dbReference>
<dbReference type="InterPro" id="IPR028909">
    <property type="entry name" value="bL21-like"/>
</dbReference>
<dbReference type="InterPro" id="IPR036164">
    <property type="entry name" value="bL21-like_sf"/>
</dbReference>
<dbReference type="InterPro" id="IPR001787">
    <property type="entry name" value="Ribosomal_bL21"/>
</dbReference>
<dbReference type="NCBIfam" id="TIGR00061">
    <property type="entry name" value="L21"/>
    <property type="match status" value="1"/>
</dbReference>
<dbReference type="NCBIfam" id="NF008915">
    <property type="entry name" value="PRK12278.1-1"/>
    <property type="match status" value="1"/>
</dbReference>
<dbReference type="PANTHER" id="PTHR21349">
    <property type="entry name" value="50S RIBOSOMAL PROTEIN L21"/>
    <property type="match status" value="1"/>
</dbReference>
<dbReference type="PANTHER" id="PTHR21349:SF0">
    <property type="entry name" value="LARGE RIBOSOMAL SUBUNIT PROTEIN BL21M"/>
    <property type="match status" value="1"/>
</dbReference>
<dbReference type="Pfam" id="PF00829">
    <property type="entry name" value="Ribosomal_L21p"/>
    <property type="match status" value="1"/>
</dbReference>
<dbReference type="SUPFAM" id="SSF141091">
    <property type="entry name" value="L21p-like"/>
    <property type="match status" value="1"/>
</dbReference>
<feature type="chain" id="PRO_0000270677" description="Large ribosomal subunit protein bL21">
    <location>
        <begin position="1"/>
        <end position="258"/>
    </location>
</feature>
<feature type="region of interest" description="Disordered" evidence="2">
    <location>
        <begin position="140"/>
        <end position="181"/>
    </location>
</feature>
<feature type="compositionally biased region" description="Basic and acidic residues" evidence="2">
    <location>
        <begin position="140"/>
        <end position="159"/>
    </location>
</feature>
<evidence type="ECO:0000255" key="1">
    <source>
        <dbReference type="HAMAP-Rule" id="MF_01363"/>
    </source>
</evidence>
<evidence type="ECO:0000256" key="2">
    <source>
        <dbReference type="SAM" id="MobiDB-lite"/>
    </source>
</evidence>
<evidence type="ECO:0000305" key="3"/>